<organism>
    <name type="scientific">Alcanivorax borkumensis (strain ATCC 700651 / DSM 11573 / NCIMB 13689 / SK2)</name>
    <dbReference type="NCBI Taxonomy" id="393595"/>
    <lineage>
        <taxon>Bacteria</taxon>
        <taxon>Pseudomonadati</taxon>
        <taxon>Pseudomonadota</taxon>
        <taxon>Gammaproteobacteria</taxon>
        <taxon>Oceanospirillales</taxon>
        <taxon>Alcanivoracaceae</taxon>
        <taxon>Alcanivorax</taxon>
    </lineage>
</organism>
<protein>
    <recommendedName>
        <fullName>HTH-type transcriptional regulator AlkS</fullName>
    </recommendedName>
</protein>
<keyword id="KW-0238">DNA-binding</keyword>
<keyword id="KW-1185">Reference proteome</keyword>
<keyword id="KW-0804">Transcription</keyword>
<keyword id="KW-0805">Transcription regulation</keyword>
<reference key="1">
    <citation type="journal article" date="2002" name="J. Bacteriol.">
        <title>Rubredoxins involved in alkane oxidation.</title>
        <authorList>
            <person name="van Beilen J.B."/>
            <person name="Neuenschwander M."/>
            <person name="Smits T.H."/>
            <person name="Roth C."/>
            <person name="Balada S.B."/>
            <person name="Witholt B."/>
        </authorList>
    </citation>
    <scope>NUCLEOTIDE SEQUENCE [GENOMIC DNA]</scope>
    <source>
        <strain>AP1</strain>
    </source>
</reference>
<reference key="2">
    <citation type="journal article" date="2002" name="J. Bacteriol.">
        <title>Functional analysis of alkane hydroxylases from gram-negative and gram-positive bacteria.</title>
        <authorList>
            <person name="Smits T.H."/>
            <person name="Balada S.B."/>
            <person name="Witholt B."/>
            <person name="van Beilen J.B."/>
        </authorList>
    </citation>
    <scope>NUCLEOTIDE SEQUENCE [GENOMIC DNA]</scope>
    <source>
        <strain>AP1</strain>
    </source>
</reference>
<reference key="3">
    <citation type="journal article" date="2006" name="Nat. Biotechnol.">
        <title>Genome sequence of the ubiquitous hydrocarbon-degrading marine bacterium Alcanivorax borkumensis.</title>
        <authorList>
            <person name="Schneiker S."/>
            <person name="Martins dos Santos V.A.P."/>
            <person name="Bartels D."/>
            <person name="Bekel T."/>
            <person name="Brecht M."/>
            <person name="Buhrmester J."/>
            <person name="Chernikova T.N."/>
            <person name="Denaro R."/>
            <person name="Ferrer M."/>
            <person name="Gertler C."/>
            <person name="Goesmann A."/>
            <person name="Golyshina O.V."/>
            <person name="Kaminski F."/>
            <person name="Khachane A.N."/>
            <person name="Lang S."/>
            <person name="Linke B."/>
            <person name="McHardy A.C."/>
            <person name="Meyer F."/>
            <person name="Nechitaylo T."/>
            <person name="Puehler A."/>
            <person name="Regenhardt D."/>
            <person name="Rupp O."/>
            <person name="Sabirova J.S."/>
            <person name="Selbitschka W."/>
            <person name="Yakimov M.M."/>
            <person name="Timmis K.N."/>
            <person name="Vorhoelter F.-J."/>
            <person name="Weidner S."/>
            <person name="Kaiser O."/>
            <person name="Golyshin P.N."/>
        </authorList>
    </citation>
    <scope>NUCLEOTIDE SEQUENCE [LARGE SCALE GENOMIC DNA]</scope>
    <source>
        <strain>ATCC 700651 / DSM 11573 / NCIMB 13689 / SK2</strain>
    </source>
</reference>
<reference key="4">
    <citation type="journal article" date="2004" name="Environ. Microbiol.">
        <title>Characterization of two alkane hydroxylase genes from the marine hydrocarbonoclastic bacterium Alcanivorax borkumensis.</title>
        <authorList>
            <person name="van Beilen J.B."/>
            <person name="Marin M.M."/>
            <person name="Smits T.H."/>
            <person name="Rothlisberger M."/>
            <person name="Franchini A.G."/>
            <person name="Witholt B."/>
            <person name="Rojo F."/>
        </authorList>
    </citation>
    <scope>FUNCTION</scope>
    <scope>INDUCTION</scope>
</reference>
<sequence length="872" mass="98110">MLCDNLENWCLRMSDRMWARQRFITQGCIERGRLKASAESESKVILYRAPLGYGKSVQVAFEAGTQGREEGGVAYINTRSYPGSGEITDSLLAALILYQIKGREPWSVIQSNDDIIESLRDTLCNAKNPIKICIDGIGEAEHGVGLVENLICETPNNVKFYIAPSNAGALARLSMMAGVVTYGAHDLVFTEEEVCELPGMHSAKAKNVIEATGGWPALVGLMCHTSNPNLPAATWPETRSYFRNNLLNALPNNTREFICKAAMLEEISVACYDYVYKTEEAHKEIPFINENYALFTPTESSRECMVMHPVLREYLRGLFDSIQRERRSYVLKRVAFWHWRRGEYLHSINAAQEASDHSWARAVSDSIILDVALRQGEIEVLRTWFEKVPVRTIKKIASLSISYAWILYFSQQARQAEKILASSTESCSRGLDNLDEKGWRKLVDAVGKATQDQFAQSQTLCQQWIDTFGERNMVGKGAALTCQAYIASSDRRFEDLEQLLHRGAVANQSSNQHYAFVWLKTAELQAEIFKGDIAHAMSILLEANKTAEKMGVSKTFLNKMLGSLELQILHEKSPSLISYESAEESFNFALNYGVTDILWGCTQTFSSFLYQQGLRDRAMAILEQTRIAACERDLPRLNMLAKIQLAEFTLINDEELEPPILPDESELTFLPNQNQAIRARIALVNSMYRLRLGKQFGVAEKYAKKALQSASAISDARTKIAAQYCQALAVFGLGSSKLAKRTIIDADQLTEHLSCYFTRDWIKEALMSFSPIARDLFDTLPESAETNATKDLEVRKEEADARPKLTNTQSTITIKQISLLKCVSSGMTNKEIAERLLITEDTVKWHLKKIFSELKVTNRVRAVSEARLRGLL</sequence>
<gene>
    <name type="primary">alkS</name>
    <name type="ordered locus">ABO_2706</name>
</gene>
<accession>Q0VKZ4</accession>
<accession>Q93UQ2</accession>
<feature type="chain" id="PRO_0000392223" description="HTH-type transcriptional regulator AlkS">
    <location>
        <begin position="1"/>
        <end position="872"/>
    </location>
</feature>
<feature type="domain" description="HTH luxR-type" evidence="1">
    <location>
        <begin position="805"/>
        <end position="870"/>
    </location>
</feature>
<feature type="DNA-binding region" description="H-T-H motif" evidence="1">
    <location>
        <begin position="829"/>
        <end position="848"/>
    </location>
</feature>
<feature type="sequence conflict" description="In Ref. 1; CAC38026." evidence="3" ref="1">
    <original>E</original>
    <variation>D</variation>
    <location>
        <position position="256"/>
    </location>
</feature>
<feature type="sequence conflict" description="In Ref. 1; CAC38026." evidence="3" ref="1">
    <original>V</original>
    <variation>I</variation>
    <location>
        <position position="730"/>
    </location>
</feature>
<feature type="sequence conflict" description="In Ref. 1; CAC38026." evidence="3" ref="1">
    <original>R</original>
    <variation>Q</variation>
    <location>
        <position position="861"/>
    </location>
</feature>
<proteinExistence type="evidence at transcript level"/>
<comment type="function">
    <text evidence="2">This protein activates the expression of AlkB1 in the presence of alkanes.</text>
</comment>
<comment type="pathway">
    <text>Hydrocarbon metabolism; alkane degradation.</text>
</comment>
<comment type="induction">
    <text evidence="2">Induced upon entry into stationary phase.</text>
</comment>
<dbReference type="EMBL" id="AJ295164">
    <property type="protein sequence ID" value="CAC38026.1"/>
    <property type="molecule type" value="Genomic_DNA"/>
</dbReference>
<dbReference type="EMBL" id="AM286690">
    <property type="protein sequence ID" value="CAL18154.1"/>
    <property type="molecule type" value="Genomic_DNA"/>
</dbReference>
<dbReference type="SMR" id="Q0VKZ4"/>
<dbReference type="STRING" id="393595.ABO_2706"/>
<dbReference type="KEGG" id="abo:ABO_2706"/>
<dbReference type="eggNOG" id="COG2909">
    <property type="taxonomic scope" value="Bacteria"/>
</dbReference>
<dbReference type="HOGENOM" id="CLU_006325_2_0_6"/>
<dbReference type="OrthoDB" id="1123107at2"/>
<dbReference type="UniPathway" id="UPA00191"/>
<dbReference type="Proteomes" id="UP000008871">
    <property type="component" value="Chromosome"/>
</dbReference>
<dbReference type="GO" id="GO:0003677">
    <property type="term" value="F:DNA binding"/>
    <property type="evidence" value="ECO:0007669"/>
    <property type="project" value="UniProtKB-KW"/>
</dbReference>
<dbReference type="GO" id="GO:0043448">
    <property type="term" value="P:alkane catabolic process"/>
    <property type="evidence" value="ECO:0007669"/>
    <property type="project" value="UniProtKB-UniPathway"/>
</dbReference>
<dbReference type="GO" id="GO:0006355">
    <property type="term" value="P:regulation of DNA-templated transcription"/>
    <property type="evidence" value="ECO:0007669"/>
    <property type="project" value="InterPro"/>
</dbReference>
<dbReference type="CDD" id="cd06170">
    <property type="entry name" value="LuxR_C_like"/>
    <property type="match status" value="1"/>
</dbReference>
<dbReference type="Gene3D" id="1.10.10.10">
    <property type="entry name" value="Winged helix-like DNA-binding domain superfamily/Winged helix DNA-binding domain"/>
    <property type="match status" value="1"/>
</dbReference>
<dbReference type="InterPro" id="IPR016032">
    <property type="entry name" value="Sig_transdc_resp-reg_C-effctor"/>
</dbReference>
<dbReference type="InterPro" id="IPR000792">
    <property type="entry name" value="Tscrpt_reg_LuxR_C"/>
</dbReference>
<dbReference type="InterPro" id="IPR036388">
    <property type="entry name" value="WH-like_DNA-bd_sf"/>
</dbReference>
<dbReference type="PANTHER" id="PTHR44688">
    <property type="entry name" value="DNA-BINDING TRANSCRIPTIONAL ACTIVATOR DEVR_DOSR"/>
    <property type="match status" value="1"/>
</dbReference>
<dbReference type="PANTHER" id="PTHR44688:SF16">
    <property type="entry name" value="DNA-BINDING TRANSCRIPTIONAL ACTIVATOR DEVR_DOSR"/>
    <property type="match status" value="1"/>
</dbReference>
<dbReference type="Pfam" id="PF00196">
    <property type="entry name" value="GerE"/>
    <property type="match status" value="1"/>
</dbReference>
<dbReference type="PRINTS" id="PR00038">
    <property type="entry name" value="HTHLUXR"/>
</dbReference>
<dbReference type="SMART" id="SM00421">
    <property type="entry name" value="HTH_LUXR"/>
    <property type="match status" value="1"/>
</dbReference>
<dbReference type="SUPFAM" id="SSF46894">
    <property type="entry name" value="C-terminal effector domain of the bipartite response regulators"/>
    <property type="match status" value="1"/>
</dbReference>
<dbReference type="PROSITE" id="PS50043">
    <property type="entry name" value="HTH_LUXR_2"/>
    <property type="match status" value="1"/>
</dbReference>
<name>ALKS_ALCBS</name>
<evidence type="ECO:0000255" key="1">
    <source>
        <dbReference type="PROSITE-ProRule" id="PRU00411"/>
    </source>
</evidence>
<evidence type="ECO:0000269" key="2">
    <source>
    </source>
</evidence>
<evidence type="ECO:0000305" key="3"/>